<evidence type="ECO:0000255" key="1">
    <source>
        <dbReference type="HAMAP-Rule" id="MF_00373"/>
    </source>
</evidence>
<evidence type="ECO:0000256" key="2">
    <source>
        <dbReference type="SAM" id="MobiDB-lite"/>
    </source>
</evidence>
<evidence type="ECO:0000305" key="3"/>
<organism>
    <name type="scientific">Burkholderia orbicola (strain AU 1054)</name>
    <dbReference type="NCBI Taxonomy" id="331271"/>
    <lineage>
        <taxon>Bacteria</taxon>
        <taxon>Pseudomonadati</taxon>
        <taxon>Pseudomonadota</taxon>
        <taxon>Betaproteobacteria</taxon>
        <taxon>Burkholderiales</taxon>
        <taxon>Burkholderiaceae</taxon>
        <taxon>Burkholderia</taxon>
        <taxon>Burkholderia cepacia complex</taxon>
        <taxon>Burkholderia orbicola</taxon>
    </lineage>
</organism>
<name>RL28_BURO1</name>
<proteinExistence type="inferred from homology"/>
<feature type="chain" id="PRO_1000007186" description="Large ribosomal subunit protein bL28">
    <location>
        <begin position="1"/>
        <end position="77"/>
    </location>
</feature>
<feature type="region of interest" description="Disordered" evidence="2">
    <location>
        <begin position="1"/>
        <end position="25"/>
    </location>
</feature>
<accession>Q1BUB1</accession>
<sequence>MARVCQVTGKAPMSGNNVSHANNKTKRRFLPNLQNRRFWVESENRWVRLRVSNAGLRLIDKNGIDSVLADLRARGEA</sequence>
<comment type="similarity">
    <text evidence="1">Belongs to the bacterial ribosomal protein bL28 family.</text>
</comment>
<gene>
    <name evidence="1" type="primary">rpmB</name>
    <name type="ordered locus">Bcen_1891</name>
</gene>
<keyword id="KW-0687">Ribonucleoprotein</keyword>
<keyword id="KW-0689">Ribosomal protein</keyword>
<dbReference type="EMBL" id="CP000378">
    <property type="protein sequence ID" value="ABF76794.1"/>
    <property type="molecule type" value="Genomic_DNA"/>
</dbReference>
<dbReference type="SMR" id="Q1BUB1"/>
<dbReference type="HOGENOM" id="CLU_064548_3_1_4"/>
<dbReference type="GO" id="GO:0022625">
    <property type="term" value="C:cytosolic large ribosomal subunit"/>
    <property type="evidence" value="ECO:0007669"/>
    <property type="project" value="TreeGrafter"/>
</dbReference>
<dbReference type="GO" id="GO:0003735">
    <property type="term" value="F:structural constituent of ribosome"/>
    <property type="evidence" value="ECO:0007669"/>
    <property type="project" value="InterPro"/>
</dbReference>
<dbReference type="GO" id="GO:0006412">
    <property type="term" value="P:translation"/>
    <property type="evidence" value="ECO:0007669"/>
    <property type="project" value="UniProtKB-UniRule"/>
</dbReference>
<dbReference type="FunFam" id="2.30.170.40:FF:000001">
    <property type="entry name" value="50S ribosomal protein L28"/>
    <property type="match status" value="1"/>
</dbReference>
<dbReference type="Gene3D" id="2.30.170.40">
    <property type="entry name" value="Ribosomal protein L28/L24"/>
    <property type="match status" value="1"/>
</dbReference>
<dbReference type="HAMAP" id="MF_00373">
    <property type="entry name" value="Ribosomal_bL28"/>
    <property type="match status" value="1"/>
</dbReference>
<dbReference type="InterPro" id="IPR026569">
    <property type="entry name" value="Ribosomal_bL28"/>
</dbReference>
<dbReference type="InterPro" id="IPR034704">
    <property type="entry name" value="Ribosomal_bL28/bL31-like_sf"/>
</dbReference>
<dbReference type="InterPro" id="IPR001383">
    <property type="entry name" value="Ribosomal_bL28_bact-type"/>
</dbReference>
<dbReference type="InterPro" id="IPR037147">
    <property type="entry name" value="Ribosomal_bL28_sf"/>
</dbReference>
<dbReference type="NCBIfam" id="TIGR00009">
    <property type="entry name" value="L28"/>
    <property type="match status" value="1"/>
</dbReference>
<dbReference type="PANTHER" id="PTHR13528">
    <property type="entry name" value="39S RIBOSOMAL PROTEIN L28, MITOCHONDRIAL"/>
    <property type="match status" value="1"/>
</dbReference>
<dbReference type="PANTHER" id="PTHR13528:SF2">
    <property type="entry name" value="LARGE RIBOSOMAL SUBUNIT PROTEIN BL28M"/>
    <property type="match status" value="1"/>
</dbReference>
<dbReference type="Pfam" id="PF00830">
    <property type="entry name" value="Ribosomal_L28"/>
    <property type="match status" value="1"/>
</dbReference>
<dbReference type="SUPFAM" id="SSF143800">
    <property type="entry name" value="L28p-like"/>
    <property type="match status" value="1"/>
</dbReference>
<protein>
    <recommendedName>
        <fullName evidence="1">Large ribosomal subunit protein bL28</fullName>
    </recommendedName>
    <alternativeName>
        <fullName evidence="3">50S ribosomal protein L28</fullName>
    </alternativeName>
</protein>
<reference key="1">
    <citation type="submission" date="2006-05" db="EMBL/GenBank/DDBJ databases">
        <title>Complete sequence of chromosome 1 of Burkholderia cenocepacia AU 1054.</title>
        <authorList>
            <consortium name="US DOE Joint Genome Institute"/>
            <person name="Copeland A."/>
            <person name="Lucas S."/>
            <person name="Lapidus A."/>
            <person name="Barry K."/>
            <person name="Detter J.C."/>
            <person name="Glavina del Rio T."/>
            <person name="Hammon N."/>
            <person name="Israni S."/>
            <person name="Dalin E."/>
            <person name="Tice H."/>
            <person name="Pitluck S."/>
            <person name="Chain P."/>
            <person name="Malfatti S."/>
            <person name="Shin M."/>
            <person name="Vergez L."/>
            <person name="Schmutz J."/>
            <person name="Larimer F."/>
            <person name="Land M."/>
            <person name="Hauser L."/>
            <person name="Kyrpides N."/>
            <person name="Lykidis A."/>
            <person name="LiPuma J.J."/>
            <person name="Konstantinidis K."/>
            <person name="Tiedje J.M."/>
            <person name="Richardson P."/>
        </authorList>
    </citation>
    <scope>NUCLEOTIDE SEQUENCE [LARGE SCALE GENOMIC DNA]</scope>
    <source>
        <strain>AU 1054</strain>
    </source>
</reference>